<accession>Q7HKI2</accession>
<keyword id="KW-0150">Chloroplast</keyword>
<keyword id="KW-0507">mRNA processing</keyword>
<keyword id="KW-0934">Plastid</keyword>
<keyword id="KW-0694">RNA-binding</keyword>
<keyword id="KW-0819">tRNA processing</keyword>
<feature type="chain" id="PRO_0000143203" description="Maturase K">
    <location>
        <begin position="1"/>
        <end position="512"/>
    </location>
</feature>
<protein>
    <recommendedName>
        <fullName evidence="1">Maturase K</fullName>
    </recommendedName>
    <alternativeName>
        <fullName evidence="1">Intron maturase</fullName>
    </alternativeName>
</protein>
<name>MATK_ACEPL</name>
<geneLocation type="chloroplast"/>
<reference key="1">
    <citation type="submission" date="2002-03" db="EMBL/GenBank/DDBJ databases">
        <title>Chloroplast DNA variation of Acer campestre, A. monspessulanum and related species in Europe.</title>
        <authorList>
            <person name="Bittkau C."/>
            <person name="Mueller-Starck G."/>
        </authorList>
    </citation>
    <scope>NUCLEOTIDE SEQUENCE [GENOMIC DNA]</scope>
</reference>
<sequence length="512" mass="61010">MKEYQIHLELDRSQQHNFLYPLLFREYIYALAHDHGLNRSTIPLENGGYDNKSSSLSVKRLISRTYQRIHLSIYAKDSNPNQFIGHNNKFYSQMISEGFSVIVEIPFSLRLVAFLEGKEMAKSQNFQSIHSIFPFFENNFSHLHYVLDVLIPYPIRPEILVRTFRYWVKDASSLHLLRFFLHEYFNWNSLITPKKSNSIFSTRNPRFFLFLYNSHVYEYESIFFFLRNQSSHLRSTSSGPLFERISFYGKVEDLVQVFVNDFQDNLWLFKHPIMHYVRYQGKSVLASKDMPLLMNKWKYYLVNLWQWHFHVWSQPGRIHINHLYKDYIDFLGYLSRGRLNTLVVRSQMLENAFLIDNAMKQFETTVPIIPLIGSLTTARFCNSLGHPISKPTWADSSDSYIIDRFMRICRNLSHYHSGSSKKKSLYRIKYILRVSCVKSLVRKHKSTVRVFLKRLGSEFLEEFFTEEEHVLSLIFPRALFTSRRLYRGRVWYLDIICINDLVNHDKLEIVPN</sequence>
<dbReference type="EMBL" id="AJ438788">
    <property type="protein sequence ID" value="CAD27632.1"/>
    <property type="molecule type" value="Genomic_DNA"/>
</dbReference>
<dbReference type="RefSeq" id="YP_009972810.1">
    <property type="nucleotide sequence ID" value="NC_051959.1"/>
</dbReference>
<dbReference type="GeneID" id="60457779"/>
<dbReference type="GO" id="GO:0009507">
    <property type="term" value="C:chloroplast"/>
    <property type="evidence" value="ECO:0007669"/>
    <property type="project" value="UniProtKB-SubCell"/>
</dbReference>
<dbReference type="GO" id="GO:0003723">
    <property type="term" value="F:RNA binding"/>
    <property type="evidence" value="ECO:0007669"/>
    <property type="project" value="UniProtKB-KW"/>
</dbReference>
<dbReference type="GO" id="GO:0006397">
    <property type="term" value="P:mRNA processing"/>
    <property type="evidence" value="ECO:0007669"/>
    <property type="project" value="UniProtKB-KW"/>
</dbReference>
<dbReference type="GO" id="GO:0008380">
    <property type="term" value="P:RNA splicing"/>
    <property type="evidence" value="ECO:0007669"/>
    <property type="project" value="UniProtKB-UniRule"/>
</dbReference>
<dbReference type="GO" id="GO:0008033">
    <property type="term" value="P:tRNA processing"/>
    <property type="evidence" value="ECO:0007669"/>
    <property type="project" value="UniProtKB-KW"/>
</dbReference>
<dbReference type="HAMAP" id="MF_01390">
    <property type="entry name" value="MatK"/>
    <property type="match status" value="1"/>
</dbReference>
<dbReference type="InterPro" id="IPR024937">
    <property type="entry name" value="Domain_X"/>
</dbReference>
<dbReference type="InterPro" id="IPR002866">
    <property type="entry name" value="Maturase_MatK"/>
</dbReference>
<dbReference type="InterPro" id="IPR024942">
    <property type="entry name" value="Maturase_MatK_N"/>
</dbReference>
<dbReference type="PANTHER" id="PTHR34811">
    <property type="entry name" value="MATURASE K"/>
    <property type="match status" value="1"/>
</dbReference>
<dbReference type="PANTHER" id="PTHR34811:SF1">
    <property type="entry name" value="MATURASE K"/>
    <property type="match status" value="1"/>
</dbReference>
<dbReference type="Pfam" id="PF01348">
    <property type="entry name" value="Intron_maturas2"/>
    <property type="match status" value="1"/>
</dbReference>
<dbReference type="Pfam" id="PF01824">
    <property type="entry name" value="MatK_N"/>
    <property type="match status" value="1"/>
</dbReference>
<gene>
    <name evidence="1" type="primary">matK</name>
</gene>
<proteinExistence type="inferred from homology"/>
<comment type="function">
    <text evidence="1">Usually encoded in the trnK tRNA gene intron. Probably assists in splicing its own and other chloroplast group II introns.</text>
</comment>
<comment type="subcellular location">
    <subcellularLocation>
        <location>Plastid</location>
        <location>Chloroplast</location>
    </subcellularLocation>
</comment>
<comment type="similarity">
    <text evidence="1">Belongs to the intron maturase 2 family. MatK subfamily.</text>
</comment>
<evidence type="ECO:0000255" key="1">
    <source>
        <dbReference type="HAMAP-Rule" id="MF_01390"/>
    </source>
</evidence>
<organism>
    <name type="scientific">Acer platanoides</name>
    <name type="common">Norway maple</name>
    <dbReference type="NCBI Taxonomy" id="4025"/>
    <lineage>
        <taxon>Eukaryota</taxon>
        <taxon>Viridiplantae</taxon>
        <taxon>Streptophyta</taxon>
        <taxon>Embryophyta</taxon>
        <taxon>Tracheophyta</taxon>
        <taxon>Spermatophyta</taxon>
        <taxon>Magnoliopsida</taxon>
        <taxon>eudicotyledons</taxon>
        <taxon>Gunneridae</taxon>
        <taxon>Pentapetalae</taxon>
        <taxon>rosids</taxon>
        <taxon>malvids</taxon>
        <taxon>Sapindales</taxon>
        <taxon>Sapindaceae</taxon>
        <taxon>Hippocastanoideae</taxon>
        <taxon>Acereae</taxon>
        <taxon>Acer</taxon>
    </lineage>
</organism>